<sequence length="90" mass="9858">MNADGPVVNVHVLFFAKSRELANTPRSTVEVPTEITATELLDHLVSKFGLTSIRDNLILAHNESYIDNLSDRILFKEGDELAIIPPLSGG</sequence>
<feature type="chain" id="PRO_0000369312" description="Molybdopterin synthase sulfur carrier subunit">
    <location>
        <begin position="1"/>
        <end position="90"/>
    </location>
</feature>
<feature type="modified residue" description="1-thioglycine; alternate" evidence="1">
    <location>
        <position position="90"/>
    </location>
</feature>
<feature type="modified residue" description="Glycyl adenylate; alternate" evidence="1">
    <location>
        <position position="90"/>
    </location>
</feature>
<protein>
    <recommendedName>
        <fullName evidence="1">Molybdopterin synthase sulfur carrier subunit</fullName>
    </recommendedName>
    <alternativeName>
        <fullName evidence="1">Molybdenum cofactor synthesis protein 2 small subunit</fullName>
    </alternativeName>
    <alternativeName>
        <fullName evidence="1">Molybdenum cofactor synthesis protein 2A</fullName>
        <shortName evidence="1">MOCS2A</shortName>
    </alternativeName>
    <alternativeName>
        <fullName evidence="1">Sulfur carrier protein MOCS2A</fullName>
    </alternativeName>
</protein>
<dbReference type="EMBL" id="AE014297">
    <property type="protein sequence ID" value="ACZ95014.1"/>
    <property type="molecule type" value="Genomic_DNA"/>
</dbReference>
<dbReference type="RefSeq" id="NP_001163720.1">
    <property type="nucleotide sequence ID" value="NM_001170249.1"/>
</dbReference>
<dbReference type="SMR" id="P0C919"/>
<dbReference type="BioGRID" id="1073035">
    <property type="interactions" value="1"/>
</dbReference>
<dbReference type="FunCoup" id="P0C919">
    <property type="interactions" value="14"/>
</dbReference>
<dbReference type="STRING" id="7227.FBpp0289862"/>
<dbReference type="PaxDb" id="7227-FBpp0289862"/>
<dbReference type="EnsemblMetazoa" id="FBtr0300637">
    <property type="protein sequence ID" value="FBpp0289862"/>
    <property type="gene ID" value="FBgn0260229"/>
</dbReference>
<dbReference type="GeneID" id="8674021"/>
<dbReference type="KEGG" id="dme:Dmel_CG42503"/>
<dbReference type="AGR" id="FB:FBgn0260229"/>
<dbReference type="CTD" id="8674021"/>
<dbReference type="FlyBase" id="FBgn0260229">
    <property type="gene designation" value="Mocs2A"/>
</dbReference>
<dbReference type="VEuPathDB" id="VectorBase:FBgn0260229"/>
<dbReference type="eggNOG" id="KOG3474">
    <property type="taxonomic scope" value="Eukaryota"/>
</dbReference>
<dbReference type="HOGENOM" id="CLU_114601_4_3_1"/>
<dbReference type="InParanoid" id="P0C919"/>
<dbReference type="OMA" id="HVLFFAK"/>
<dbReference type="OrthoDB" id="5531344at2759"/>
<dbReference type="PhylomeDB" id="P0C919"/>
<dbReference type="UniPathway" id="UPA00344"/>
<dbReference type="BioGRID-ORCS" id="8674021">
    <property type="hits" value="0 hits in 1 CRISPR screen"/>
</dbReference>
<dbReference type="GenomeRNAi" id="8674021"/>
<dbReference type="Proteomes" id="UP000000803">
    <property type="component" value="Chromosome 3R"/>
</dbReference>
<dbReference type="Bgee" id="FBgn0260229">
    <property type="expression patterns" value="Expressed in digestive system element and 11 other cell types or tissues"/>
</dbReference>
<dbReference type="GO" id="GO:0005829">
    <property type="term" value="C:cytosol"/>
    <property type="evidence" value="ECO:0000250"/>
    <property type="project" value="UniProtKB"/>
</dbReference>
<dbReference type="GO" id="GO:1990133">
    <property type="term" value="C:molybdopterin adenylyltransferase complex"/>
    <property type="evidence" value="ECO:0000250"/>
    <property type="project" value="FlyBase"/>
</dbReference>
<dbReference type="GO" id="GO:1990140">
    <property type="term" value="C:molybdopterin synthase complex"/>
    <property type="evidence" value="ECO:0000250"/>
    <property type="project" value="FlyBase"/>
</dbReference>
<dbReference type="GO" id="GO:0030366">
    <property type="term" value="F:molybdopterin synthase activity"/>
    <property type="evidence" value="ECO:0007669"/>
    <property type="project" value="UniProtKB-UniRule"/>
</dbReference>
<dbReference type="GO" id="GO:0000166">
    <property type="term" value="F:nucleotide binding"/>
    <property type="evidence" value="ECO:0007669"/>
    <property type="project" value="UniProtKB-KW"/>
</dbReference>
<dbReference type="GO" id="GO:0006777">
    <property type="term" value="P:Mo-molybdopterin cofactor biosynthetic process"/>
    <property type="evidence" value="ECO:0000250"/>
    <property type="project" value="UniProtKB"/>
</dbReference>
<dbReference type="CDD" id="cd00754">
    <property type="entry name" value="Ubl_MoaD"/>
    <property type="match status" value="1"/>
</dbReference>
<dbReference type="FunFam" id="3.10.20.30:FF:000010">
    <property type="entry name" value="Molybdopterin synthase sulfur carrier subunit"/>
    <property type="match status" value="1"/>
</dbReference>
<dbReference type="Gene3D" id="3.10.20.30">
    <property type="match status" value="1"/>
</dbReference>
<dbReference type="HAMAP" id="MF_03051">
    <property type="entry name" value="MOCS2A"/>
    <property type="match status" value="1"/>
</dbReference>
<dbReference type="InterPro" id="IPR012675">
    <property type="entry name" value="Beta-grasp_dom_sf"/>
</dbReference>
<dbReference type="InterPro" id="IPR044672">
    <property type="entry name" value="MOCS2A"/>
</dbReference>
<dbReference type="InterPro" id="IPR028887">
    <property type="entry name" value="MOCS2A_euk"/>
</dbReference>
<dbReference type="InterPro" id="IPR016155">
    <property type="entry name" value="Mopterin_synth/thiamin_S_b"/>
</dbReference>
<dbReference type="InterPro" id="IPR003749">
    <property type="entry name" value="ThiS/MoaD-like"/>
</dbReference>
<dbReference type="NCBIfam" id="TIGR01682">
    <property type="entry name" value="moaD"/>
    <property type="match status" value="1"/>
</dbReference>
<dbReference type="PANTHER" id="PTHR33359">
    <property type="entry name" value="MOLYBDOPTERIN SYNTHASE SULFUR CARRIER SUBUNIT"/>
    <property type="match status" value="1"/>
</dbReference>
<dbReference type="PANTHER" id="PTHR33359:SF1">
    <property type="entry name" value="MOLYBDOPTERIN SYNTHASE SULFUR CARRIER SUBUNIT"/>
    <property type="match status" value="1"/>
</dbReference>
<dbReference type="Pfam" id="PF02597">
    <property type="entry name" value="ThiS"/>
    <property type="match status" value="1"/>
</dbReference>
<dbReference type="SUPFAM" id="SSF54285">
    <property type="entry name" value="MoaD/ThiS"/>
    <property type="match status" value="1"/>
</dbReference>
<comment type="function">
    <text evidence="1 2">Acts as a sulfur carrier required for molybdopterin biosynthesis. Component of the molybdopterin synthase complex that catalyzes the conversion of precursor Z into molybdopterin by mediating the incorporation of 2 sulfur atoms into precursor Z to generate a dithiolene group. In the complex, serves as sulfur donor by being thiocarboxylated (-COSH) at its C-terminus by MOCS3. After interaction with Mocs2B, the sulfur is then transferred to precursor Z to form molybdopterin (By similarity). Involved during biosynthesis of the molybdenum cofactor (Probable).</text>
</comment>
<comment type="pathway">
    <text evidence="1">Cofactor biosynthesis; molybdopterin biosynthesis.</text>
</comment>
<comment type="subunit">
    <text evidence="1">Heterotetramer; composed of 2 small (Mocs2A) and 2 large (Mocs2B) subunits.</text>
</comment>
<comment type="subcellular location">
    <subcellularLocation>
        <location evidence="1">Cytoplasm</location>
    </subcellularLocation>
</comment>
<comment type="PTM">
    <text evidence="1">C-terminal thiocarboxylation occurs in 2 steps, it is first acyl-adenylated (-COAMP) via the hesA/moeB/thiF part of MOCS3, then thiocarboxylated (-COSH) via the rhodanese domain of MOCS3.</text>
</comment>
<comment type="miscellaneous">
    <text>This protein is produced by a bicistronic gene which also produces the large subunit (Mocs2B).</text>
</comment>
<comment type="similarity">
    <text evidence="1">Belongs to the MoaD family. MOCS2A subfamily.</text>
</comment>
<proteinExistence type="inferred from homology"/>
<reference key="1">
    <citation type="journal article" date="2000" name="Science">
        <title>The genome sequence of Drosophila melanogaster.</title>
        <authorList>
            <person name="Adams M.D."/>
            <person name="Celniker S.E."/>
            <person name="Holt R.A."/>
            <person name="Evans C.A."/>
            <person name="Gocayne J.D."/>
            <person name="Amanatides P.G."/>
            <person name="Scherer S.E."/>
            <person name="Li P.W."/>
            <person name="Hoskins R.A."/>
            <person name="Galle R.F."/>
            <person name="George R.A."/>
            <person name="Lewis S.E."/>
            <person name="Richards S."/>
            <person name="Ashburner M."/>
            <person name="Henderson S.N."/>
            <person name="Sutton G.G."/>
            <person name="Wortman J.R."/>
            <person name="Yandell M.D."/>
            <person name="Zhang Q."/>
            <person name="Chen L.X."/>
            <person name="Brandon R.C."/>
            <person name="Rogers Y.-H.C."/>
            <person name="Blazej R.G."/>
            <person name="Champe M."/>
            <person name="Pfeiffer B.D."/>
            <person name="Wan K.H."/>
            <person name="Doyle C."/>
            <person name="Baxter E.G."/>
            <person name="Helt G."/>
            <person name="Nelson C.R."/>
            <person name="Miklos G.L.G."/>
            <person name="Abril J.F."/>
            <person name="Agbayani A."/>
            <person name="An H.-J."/>
            <person name="Andrews-Pfannkoch C."/>
            <person name="Baldwin D."/>
            <person name="Ballew R.M."/>
            <person name="Basu A."/>
            <person name="Baxendale J."/>
            <person name="Bayraktaroglu L."/>
            <person name="Beasley E.M."/>
            <person name="Beeson K.Y."/>
            <person name="Benos P.V."/>
            <person name="Berman B.P."/>
            <person name="Bhandari D."/>
            <person name="Bolshakov S."/>
            <person name="Borkova D."/>
            <person name="Botchan M.R."/>
            <person name="Bouck J."/>
            <person name="Brokstein P."/>
            <person name="Brottier P."/>
            <person name="Burtis K.C."/>
            <person name="Busam D.A."/>
            <person name="Butler H."/>
            <person name="Cadieu E."/>
            <person name="Center A."/>
            <person name="Chandra I."/>
            <person name="Cherry J.M."/>
            <person name="Cawley S."/>
            <person name="Dahlke C."/>
            <person name="Davenport L.B."/>
            <person name="Davies P."/>
            <person name="de Pablos B."/>
            <person name="Delcher A."/>
            <person name="Deng Z."/>
            <person name="Mays A.D."/>
            <person name="Dew I."/>
            <person name="Dietz S.M."/>
            <person name="Dodson K."/>
            <person name="Doup L.E."/>
            <person name="Downes M."/>
            <person name="Dugan-Rocha S."/>
            <person name="Dunkov B.C."/>
            <person name="Dunn P."/>
            <person name="Durbin K.J."/>
            <person name="Evangelista C.C."/>
            <person name="Ferraz C."/>
            <person name="Ferriera S."/>
            <person name="Fleischmann W."/>
            <person name="Fosler C."/>
            <person name="Gabrielian A.E."/>
            <person name="Garg N.S."/>
            <person name="Gelbart W.M."/>
            <person name="Glasser K."/>
            <person name="Glodek A."/>
            <person name="Gong F."/>
            <person name="Gorrell J.H."/>
            <person name="Gu Z."/>
            <person name="Guan P."/>
            <person name="Harris M."/>
            <person name="Harris N.L."/>
            <person name="Harvey D.A."/>
            <person name="Heiman T.J."/>
            <person name="Hernandez J.R."/>
            <person name="Houck J."/>
            <person name="Hostin D."/>
            <person name="Houston K.A."/>
            <person name="Howland T.J."/>
            <person name="Wei M.-H."/>
            <person name="Ibegwam C."/>
            <person name="Jalali M."/>
            <person name="Kalush F."/>
            <person name="Karpen G.H."/>
            <person name="Ke Z."/>
            <person name="Kennison J.A."/>
            <person name="Ketchum K.A."/>
            <person name="Kimmel B.E."/>
            <person name="Kodira C.D."/>
            <person name="Kraft C.L."/>
            <person name="Kravitz S."/>
            <person name="Kulp D."/>
            <person name="Lai Z."/>
            <person name="Lasko P."/>
            <person name="Lei Y."/>
            <person name="Levitsky A.A."/>
            <person name="Li J.H."/>
            <person name="Li Z."/>
            <person name="Liang Y."/>
            <person name="Lin X."/>
            <person name="Liu X."/>
            <person name="Mattei B."/>
            <person name="McIntosh T.C."/>
            <person name="McLeod M.P."/>
            <person name="McPherson D."/>
            <person name="Merkulov G."/>
            <person name="Milshina N.V."/>
            <person name="Mobarry C."/>
            <person name="Morris J."/>
            <person name="Moshrefi A."/>
            <person name="Mount S.M."/>
            <person name="Moy M."/>
            <person name="Murphy B."/>
            <person name="Murphy L."/>
            <person name="Muzny D.M."/>
            <person name="Nelson D.L."/>
            <person name="Nelson D.R."/>
            <person name="Nelson K.A."/>
            <person name="Nixon K."/>
            <person name="Nusskern D.R."/>
            <person name="Pacleb J.M."/>
            <person name="Palazzolo M."/>
            <person name="Pittman G.S."/>
            <person name="Pan S."/>
            <person name="Pollard J."/>
            <person name="Puri V."/>
            <person name="Reese M.G."/>
            <person name="Reinert K."/>
            <person name="Remington K."/>
            <person name="Saunders R.D.C."/>
            <person name="Scheeler F."/>
            <person name="Shen H."/>
            <person name="Shue B.C."/>
            <person name="Siden-Kiamos I."/>
            <person name="Simpson M."/>
            <person name="Skupski M.P."/>
            <person name="Smith T.J."/>
            <person name="Spier E."/>
            <person name="Spradling A.C."/>
            <person name="Stapleton M."/>
            <person name="Strong R."/>
            <person name="Sun E."/>
            <person name="Svirskas R."/>
            <person name="Tector C."/>
            <person name="Turner R."/>
            <person name="Venter E."/>
            <person name="Wang A.H."/>
            <person name="Wang X."/>
            <person name="Wang Z.-Y."/>
            <person name="Wassarman D.A."/>
            <person name="Weinstock G.M."/>
            <person name="Weissenbach J."/>
            <person name="Williams S.M."/>
            <person name="Woodage T."/>
            <person name="Worley K.C."/>
            <person name="Wu D."/>
            <person name="Yang S."/>
            <person name="Yao Q.A."/>
            <person name="Ye J."/>
            <person name="Yeh R.-F."/>
            <person name="Zaveri J.S."/>
            <person name="Zhan M."/>
            <person name="Zhang G."/>
            <person name="Zhao Q."/>
            <person name="Zheng L."/>
            <person name="Zheng X.H."/>
            <person name="Zhong F.N."/>
            <person name="Zhong W."/>
            <person name="Zhou X."/>
            <person name="Zhu S.C."/>
            <person name="Zhu X."/>
            <person name="Smith H.O."/>
            <person name="Gibbs R.A."/>
            <person name="Myers E.W."/>
            <person name="Rubin G.M."/>
            <person name="Venter J.C."/>
        </authorList>
    </citation>
    <scope>NUCLEOTIDE SEQUENCE [LARGE SCALE GENOMIC DNA]</scope>
    <source>
        <strain>Berkeley</strain>
    </source>
</reference>
<reference key="2">
    <citation type="journal article" date="2002" name="Genome Biol.">
        <title>Annotation of the Drosophila melanogaster euchromatic genome: a systematic review.</title>
        <authorList>
            <person name="Misra S."/>
            <person name="Crosby M.A."/>
            <person name="Mungall C.J."/>
            <person name="Matthews B.B."/>
            <person name="Campbell K.S."/>
            <person name="Hradecky P."/>
            <person name="Huang Y."/>
            <person name="Kaminker J.S."/>
            <person name="Millburn G.H."/>
            <person name="Prochnik S.E."/>
            <person name="Smith C.D."/>
            <person name="Tupy J.L."/>
            <person name="Whitfield E.J."/>
            <person name="Bayraktaroglu L."/>
            <person name="Berman B.P."/>
            <person name="Bettencourt B.R."/>
            <person name="Celniker S.E."/>
            <person name="de Grey A.D.N.J."/>
            <person name="Drysdale R.A."/>
            <person name="Harris N.L."/>
            <person name="Richter J."/>
            <person name="Russo S."/>
            <person name="Schroeder A.J."/>
            <person name="Shu S.Q."/>
            <person name="Stapleton M."/>
            <person name="Yamada C."/>
            <person name="Ashburner M."/>
            <person name="Gelbart W.M."/>
            <person name="Rubin G.M."/>
            <person name="Lewis S.E."/>
        </authorList>
    </citation>
    <scope>GENOME REANNOTATION</scope>
    <source>
        <strain>Berkeley</strain>
    </source>
</reference>
<reference key="3">
    <citation type="journal article" date="2008" name="BMC Genomics">
        <title>Comparative genomic analysis of novel conserved peptide upstream open reading frames in Drosophila melanogaster and other dipteran species.</title>
        <authorList>
            <person name="Hayden C.A."/>
            <person name="Bosco G."/>
        </authorList>
    </citation>
    <scope>IDENTIFICATION</scope>
</reference>
<reference key="4">
    <citation type="journal article" date="2018" name="Front. Physiol.">
        <title>Iron Sulfur and Molybdenum Cofactor Enzymes Regulate the Drosophila Life Cycle by Controlling Cell Metabolism.</title>
        <authorList>
            <person name="Marelja Z."/>
            <person name="Leimkuehler S."/>
            <person name="Missirlis F."/>
        </authorList>
    </citation>
    <scope>FUNCTION</scope>
</reference>
<gene>
    <name evidence="3" type="primary">Mocs2A</name>
    <name evidence="1" type="synonym">Mocs2</name>
    <name evidence="3" type="ORF">CG42503</name>
</gene>
<name>MOC2A_DROME</name>
<keyword id="KW-0963">Cytoplasm</keyword>
<keyword id="KW-0501">Molybdenum cofactor biosynthesis</keyword>
<keyword id="KW-0547">Nucleotide-binding</keyword>
<keyword id="KW-0597">Phosphoprotein</keyword>
<keyword id="KW-1185">Reference proteome</keyword>
<evidence type="ECO:0000255" key="1">
    <source>
        <dbReference type="HAMAP-Rule" id="MF_03051"/>
    </source>
</evidence>
<evidence type="ECO:0000305" key="2">
    <source>
    </source>
</evidence>
<evidence type="ECO:0000312" key="3">
    <source>
        <dbReference type="FlyBase" id="FBgn0260229"/>
    </source>
</evidence>
<organism>
    <name type="scientific">Drosophila melanogaster</name>
    <name type="common">Fruit fly</name>
    <dbReference type="NCBI Taxonomy" id="7227"/>
    <lineage>
        <taxon>Eukaryota</taxon>
        <taxon>Metazoa</taxon>
        <taxon>Ecdysozoa</taxon>
        <taxon>Arthropoda</taxon>
        <taxon>Hexapoda</taxon>
        <taxon>Insecta</taxon>
        <taxon>Pterygota</taxon>
        <taxon>Neoptera</taxon>
        <taxon>Endopterygota</taxon>
        <taxon>Diptera</taxon>
        <taxon>Brachycera</taxon>
        <taxon>Muscomorpha</taxon>
        <taxon>Ephydroidea</taxon>
        <taxon>Drosophilidae</taxon>
        <taxon>Drosophila</taxon>
        <taxon>Sophophora</taxon>
    </lineage>
</organism>
<accession>P0C919</accession>
<accession>E1JIW5</accession>